<reference key="1">
    <citation type="journal article" date="2003" name="Nucleic Acids Res.">
        <title>Genome sequence of Chlamydophila caviae (Chlamydia psittaci GPIC): examining the role of niche-specific genes in the evolution of the Chlamydiaceae.</title>
        <authorList>
            <person name="Read T.D."/>
            <person name="Myers G.S.A."/>
            <person name="Brunham R.C."/>
            <person name="Nelson W.C."/>
            <person name="Paulsen I.T."/>
            <person name="Heidelberg J.F."/>
            <person name="Holtzapple E.K."/>
            <person name="Khouri H.M."/>
            <person name="Federova N.B."/>
            <person name="Carty H.A."/>
            <person name="Umayam L.A."/>
            <person name="Haft D.H."/>
            <person name="Peterson J.D."/>
            <person name="Beanan M.J."/>
            <person name="White O."/>
            <person name="Salzberg S.L."/>
            <person name="Hsia R.-C."/>
            <person name="McClarty G."/>
            <person name="Rank R.G."/>
            <person name="Bavoil P.M."/>
            <person name="Fraser C.M."/>
        </authorList>
    </citation>
    <scope>NUCLEOTIDE SEQUENCE [LARGE SCALE GENOMIC DNA]</scope>
    <source>
        <strain>ATCC VR-813 / DSM 19441 / 03DC25 / GPIC</strain>
    </source>
</reference>
<protein>
    <recommendedName>
        <fullName evidence="1">Endoribonuclease YbeY</fullName>
        <ecNumber evidence="1">3.1.-.-</ecNumber>
    </recommendedName>
</protein>
<sequence length="158" mass="18242">MKKVSIQVCISNKQNDVPIRIQSAKKLVLYCLQHWEVHTDQVYIYFLDDESLAQLHDEVFSDPSLTDTITLPIDSPGTSSQPHILGEAFISPKAAIRFLKDRAEDSDLLYEEISRYVIHSLLHMLGYDDQTPEERKKMRVKENQALCMLREKHALLSD</sequence>
<keyword id="KW-0963">Cytoplasm</keyword>
<keyword id="KW-0255">Endonuclease</keyword>
<keyword id="KW-0378">Hydrolase</keyword>
<keyword id="KW-0479">Metal-binding</keyword>
<keyword id="KW-0540">Nuclease</keyword>
<keyword id="KW-0690">Ribosome biogenesis</keyword>
<keyword id="KW-0698">rRNA processing</keyword>
<keyword id="KW-0862">Zinc</keyword>
<gene>
    <name evidence="1" type="primary">ybeY</name>
    <name type="ordered locus">CCA_00235</name>
</gene>
<dbReference type="EC" id="3.1.-.-" evidence="1"/>
<dbReference type="EMBL" id="AE015925">
    <property type="protein sequence ID" value="AAP04986.1"/>
    <property type="molecule type" value="Genomic_DNA"/>
</dbReference>
<dbReference type="RefSeq" id="WP_011006204.1">
    <property type="nucleotide sequence ID" value="NC_003361.3"/>
</dbReference>
<dbReference type="SMR" id="Q824B8"/>
<dbReference type="STRING" id="227941.CCA_00235"/>
<dbReference type="KEGG" id="cca:CCA_00235"/>
<dbReference type="eggNOG" id="COG0319">
    <property type="taxonomic scope" value="Bacteria"/>
</dbReference>
<dbReference type="HOGENOM" id="CLU_106710_2_0_0"/>
<dbReference type="OrthoDB" id="9807740at2"/>
<dbReference type="Proteomes" id="UP000002193">
    <property type="component" value="Chromosome"/>
</dbReference>
<dbReference type="GO" id="GO:0005737">
    <property type="term" value="C:cytoplasm"/>
    <property type="evidence" value="ECO:0007669"/>
    <property type="project" value="UniProtKB-SubCell"/>
</dbReference>
<dbReference type="GO" id="GO:0004222">
    <property type="term" value="F:metalloendopeptidase activity"/>
    <property type="evidence" value="ECO:0007669"/>
    <property type="project" value="InterPro"/>
</dbReference>
<dbReference type="GO" id="GO:0004521">
    <property type="term" value="F:RNA endonuclease activity"/>
    <property type="evidence" value="ECO:0007669"/>
    <property type="project" value="UniProtKB-UniRule"/>
</dbReference>
<dbReference type="GO" id="GO:0008270">
    <property type="term" value="F:zinc ion binding"/>
    <property type="evidence" value="ECO:0007669"/>
    <property type="project" value="UniProtKB-UniRule"/>
</dbReference>
<dbReference type="GO" id="GO:0006364">
    <property type="term" value="P:rRNA processing"/>
    <property type="evidence" value="ECO:0007669"/>
    <property type="project" value="UniProtKB-UniRule"/>
</dbReference>
<dbReference type="Gene3D" id="3.40.390.30">
    <property type="entry name" value="Metalloproteases ('zincins'), catalytic domain"/>
    <property type="match status" value="1"/>
</dbReference>
<dbReference type="HAMAP" id="MF_00009">
    <property type="entry name" value="Endoribonucl_YbeY"/>
    <property type="match status" value="1"/>
</dbReference>
<dbReference type="InterPro" id="IPR023091">
    <property type="entry name" value="MetalPrtase_cat_dom_sf_prd"/>
</dbReference>
<dbReference type="InterPro" id="IPR002036">
    <property type="entry name" value="YbeY"/>
</dbReference>
<dbReference type="NCBIfam" id="TIGR00043">
    <property type="entry name" value="rRNA maturation RNase YbeY"/>
    <property type="match status" value="1"/>
</dbReference>
<dbReference type="Pfam" id="PF02130">
    <property type="entry name" value="YbeY"/>
    <property type="match status" value="1"/>
</dbReference>
<dbReference type="SUPFAM" id="SSF55486">
    <property type="entry name" value="Metalloproteases ('zincins'), catalytic domain"/>
    <property type="match status" value="1"/>
</dbReference>
<proteinExistence type="inferred from homology"/>
<feature type="chain" id="PRO_0000102434" description="Endoribonuclease YbeY">
    <location>
        <begin position="1"/>
        <end position="158"/>
    </location>
</feature>
<feature type="binding site" evidence="1">
    <location>
        <position position="119"/>
    </location>
    <ligand>
        <name>Zn(2+)</name>
        <dbReference type="ChEBI" id="CHEBI:29105"/>
        <note>catalytic</note>
    </ligand>
</feature>
<feature type="binding site" evidence="1">
    <location>
        <position position="123"/>
    </location>
    <ligand>
        <name>Zn(2+)</name>
        <dbReference type="ChEBI" id="CHEBI:29105"/>
        <note>catalytic</note>
    </ligand>
</feature>
<feature type="binding site" evidence="1">
    <location>
        <position position="129"/>
    </location>
    <ligand>
        <name>Zn(2+)</name>
        <dbReference type="ChEBI" id="CHEBI:29105"/>
        <note>catalytic</note>
    </ligand>
</feature>
<evidence type="ECO:0000255" key="1">
    <source>
        <dbReference type="HAMAP-Rule" id="MF_00009"/>
    </source>
</evidence>
<accession>Q824B8</accession>
<comment type="function">
    <text evidence="1">Single strand-specific metallo-endoribonuclease involved in late-stage 70S ribosome quality control and in maturation of the 3' terminus of the 16S rRNA.</text>
</comment>
<comment type="cofactor">
    <cofactor evidence="1">
        <name>Zn(2+)</name>
        <dbReference type="ChEBI" id="CHEBI:29105"/>
    </cofactor>
    <text evidence="1">Binds 1 zinc ion.</text>
</comment>
<comment type="subcellular location">
    <subcellularLocation>
        <location evidence="1">Cytoplasm</location>
    </subcellularLocation>
</comment>
<comment type="similarity">
    <text evidence="1">Belongs to the endoribonuclease YbeY family.</text>
</comment>
<organism>
    <name type="scientific">Chlamydia caviae (strain ATCC VR-813 / DSM 19441 / 03DC25 / GPIC)</name>
    <name type="common">Chlamydophila caviae</name>
    <dbReference type="NCBI Taxonomy" id="227941"/>
    <lineage>
        <taxon>Bacteria</taxon>
        <taxon>Pseudomonadati</taxon>
        <taxon>Chlamydiota</taxon>
        <taxon>Chlamydiia</taxon>
        <taxon>Chlamydiales</taxon>
        <taxon>Chlamydiaceae</taxon>
        <taxon>Chlamydia/Chlamydophila group</taxon>
        <taxon>Chlamydia</taxon>
    </lineage>
</organism>
<name>YBEY_CHLCV</name>